<keyword id="KW-0963">Cytoplasm</keyword>
<keyword id="KW-0369">Histidine metabolism</keyword>
<keyword id="KW-0456">Lyase</keyword>
<accession>B2SD96</accession>
<evidence type="ECO:0000255" key="1">
    <source>
        <dbReference type="HAMAP-Rule" id="MF_00229"/>
    </source>
</evidence>
<protein>
    <recommendedName>
        <fullName evidence="1">Histidine ammonia-lyase</fullName>
        <shortName evidence="1">Histidase</shortName>
        <ecNumber evidence="1">4.3.1.3</ecNumber>
    </recommendedName>
</protein>
<gene>
    <name evidence="1" type="primary">hutH</name>
    <name type="ordered locus">BAbS19_II02890</name>
</gene>
<organism>
    <name type="scientific">Brucella abortus (strain S19)</name>
    <dbReference type="NCBI Taxonomy" id="430066"/>
    <lineage>
        <taxon>Bacteria</taxon>
        <taxon>Pseudomonadati</taxon>
        <taxon>Pseudomonadota</taxon>
        <taxon>Alphaproteobacteria</taxon>
        <taxon>Hyphomicrobiales</taxon>
        <taxon>Brucellaceae</taxon>
        <taxon>Brucella/Ochrobactrum group</taxon>
        <taxon>Brucella</taxon>
    </lineage>
</organism>
<proteinExistence type="inferred from homology"/>
<name>HUTH_BRUA1</name>
<feature type="chain" id="PRO_1000100434" description="Histidine ammonia-lyase">
    <location>
        <begin position="1"/>
        <end position="511"/>
    </location>
</feature>
<feature type="modified residue" description="2,3-didehydroalanine (Ser)" evidence="1">
    <location>
        <position position="143"/>
    </location>
</feature>
<feature type="cross-link" description="5-imidazolinone (Ala-Gly)" evidence="1">
    <location>
        <begin position="142"/>
        <end position="144"/>
    </location>
</feature>
<reference key="1">
    <citation type="journal article" date="2008" name="PLoS ONE">
        <title>Genome sequence of Brucella abortus vaccine strain S19 compared to virulent strains yields candidate virulence genes.</title>
        <authorList>
            <person name="Crasta O.R."/>
            <person name="Folkerts O."/>
            <person name="Fei Z."/>
            <person name="Mane S.P."/>
            <person name="Evans C."/>
            <person name="Martino-Catt S."/>
            <person name="Bricker B."/>
            <person name="Yu G."/>
            <person name="Du L."/>
            <person name="Sobral B.W."/>
        </authorList>
    </citation>
    <scope>NUCLEOTIDE SEQUENCE [LARGE SCALE GENOMIC DNA]</scope>
    <source>
        <strain>S19</strain>
    </source>
</reference>
<sequence length="511" mass="53254">MTIILKPGSVPLETLEKIYREGLPVRIDPAFHAGIEKAAARIAEIAAGDAPVYGINTGFGKLASIRIAAGDVATLQRNLILSHCCGVGEPLSENIVRLIMALKLVSLGRGASGVRLEVITLIEAMLEKGVIPMIPEKGSVGASGDLAPLAHMTAAMIGEGEAFYRGERLSGAKALGKAGLKPVVLAAKEGLALINGTQTSTALALAGLFRAHRAARTALITGALSTDAAMGSDAPFHEEIHQLRGHKGQIDAGRALRTLLEGSAIRRSHLEGDQRVQDPYCIRCQPQVDGACLDILRQAARTLEIEANAVTDNPLVLSDGRAVSGGNFHAEPVAFAADQIALAVCEIGAISQRRIALLVDPSLSFGLPAFLARKPGLNSGLMIAEVTSAALMSENKQMAHPASVDSTPTSANQEDHVSMACHGARRLLQMTANLNAIIGIEALTGALGVELRKPLTTSAELAKVIAALRAKVATLEEDRYMADDLKAAAELVADGTLSGVISAGILPDLEA</sequence>
<comment type="catalytic activity">
    <reaction evidence="1">
        <text>L-histidine = trans-urocanate + NH4(+)</text>
        <dbReference type="Rhea" id="RHEA:21232"/>
        <dbReference type="ChEBI" id="CHEBI:17771"/>
        <dbReference type="ChEBI" id="CHEBI:28938"/>
        <dbReference type="ChEBI" id="CHEBI:57595"/>
        <dbReference type="EC" id="4.3.1.3"/>
    </reaction>
</comment>
<comment type="pathway">
    <text evidence="1">Amino-acid degradation; L-histidine degradation into L-glutamate; N-formimidoyl-L-glutamate from L-histidine: step 1/3.</text>
</comment>
<comment type="subcellular location">
    <subcellularLocation>
        <location evidence="1">Cytoplasm</location>
    </subcellularLocation>
</comment>
<comment type="PTM">
    <text evidence="1">Contains an active site 4-methylidene-imidazol-5-one (MIO), which is formed autocatalytically by cyclization and dehydration of residues Ala-Ser-Gly.</text>
</comment>
<comment type="similarity">
    <text evidence="1">Belongs to the PAL/histidase family.</text>
</comment>
<dbReference type="EC" id="4.3.1.3" evidence="1"/>
<dbReference type="EMBL" id="CP000888">
    <property type="protein sequence ID" value="ACD73800.1"/>
    <property type="molecule type" value="Genomic_DNA"/>
</dbReference>
<dbReference type="RefSeq" id="WP_002972121.1">
    <property type="nucleotide sequence ID" value="NC_010740.1"/>
</dbReference>
<dbReference type="SMR" id="B2SD96"/>
<dbReference type="GeneID" id="93015751"/>
<dbReference type="KEGG" id="bmc:BAbS19_II02890"/>
<dbReference type="HOGENOM" id="CLU_014801_4_0_5"/>
<dbReference type="UniPathway" id="UPA00379">
    <property type="reaction ID" value="UER00549"/>
</dbReference>
<dbReference type="Proteomes" id="UP000002565">
    <property type="component" value="Chromosome 2"/>
</dbReference>
<dbReference type="GO" id="GO:0005737">
    <property type="term" value="C:cytoplasm"/>
    <property type="evidence" value="ECO:0007669"/>
    <property type="project" value="UniProtKB-SubCell"/>
</dbReference>
<dbReference type="GO" id="GO:0004397">
    <property type="term" value="F:histidine ammonia-lyase activity"/>
    <property type="evidence" value="ECO:0007669"/>
    <property type="project" value="UniProtKB-UniRule"/>
</dbReference>
<dbReference type="GO" id="GO:0019556">
    <property type="term" value="P:L-histidine catabolic process to glutamate and formamide"/>
    <property type="evidence" value="ECO:0007669"/>
    <property type="project" value="UniProtKB-UniPathway"/>
</dbReference>
<dbReference type="GO" id="GO:0019557">
    <property type="term" value="P:L-histidine catabolic process to glutamate and formate"/>
    <property type="evidence" value="ECO:0007669"/>
    <property type="project" value="UniProtKB-UniPathway"/>
</dbReference>
<dbReference type="CDD" id="cd00332">
    <property type="entry name" value="PAL-HAL"/>
    <property type="match status" value="1"/>
</dbReference>
<dbReference type="FunFam" id="1.10.275.10:FF:000005">
    <property type="entry name" value="Histidine ammonia-lyase"/>
    <property type="match status" value="1"/>
</dbReference>
<dbReference type="FunFam" id="1.20.200.10:FF:000003">
    <property type="entry name" value="Histidine ammonia-lyase"/>
    <property type="match status" value="1"/>
</dbReference>
<dbReference type="Gene3D" id="1.20.200.10">
    <property type="entry name" value="Fumarase/aspartase (Central domain)"/>
    <property type="match status" value="1"/>
</dbReference>
<dbReference type="Gene3D" id="1.10.275.10">
    <property type="entry name" value="Fumarase/aspartase (N-terminal domain)"/>
    <property type="match status" value="1"/>
</dbReference>
<dbReference type="HAMAP" id="MF_00229">
    <property type="entry name" value="His_ammonia_lyase"/>
    <property type="match status" value="1"/>
</dbReference>
<dbReference type="InterPro" id="IPR001106">
    <property type="entry name" value="Aromatic_Lyase"/>
</dbReference>
<dbReference type="InterPro" id="IPR024083">
    <property type="entry name" value="Fumarase/histidase_N"/>
</dbReference>
<dbReference type="InterPro" id="IPR005921">
    <property type="entry name" value="HutH"/>
</dbReference>
<dbReference type="InterPro" id="IPR008948">
    <property type="entry name" value="L-Aspartase-like"/>
</dbReference>
<dbReference type="InterPro" id="IPR022313">
    <property type="entry name" value="Phe/His_NH3-lyase_AS"/>
</dbReference>
<dbReference type="NCBIfam" id="TIGR01225">
    <property type="entry name" value="hutH"/>
    <property type="match status" value="1"/>
</dbReference>
<dbReference type="NCBIfam" id="NF006871">
    <property type="entry name" value="PRK09367.1"/>
    <property type="match status" value="1"/>
</dbReference>
<dbReference type="PANTHER" id="PTHR10362">
    <property type="entry name" value="HISTIDINE AMMONIA-LYASE"/>
    <property type="match status" value="1"/>
</dbReference>
<dbReference type="Pfam" id="PF00221">
    <property type="entry name" value="Lyase_aromatic"/>
    <property type="match status" value="1"/>
</dbReference>
<dbReference type="SUPFAM" id="SSF48557">
    <property type="entry name" value="L-aspartase-like"/>
    <property type="match status" value="1"/>
</dbReference>
<dbReference type="PROSITE" id="PS00488">
    <property type="entry name" value="PAL_HISTIDASE"/>
    <property type="match status" value="1"/>
</dbReference>